<name>YCGL_ECO81</name>
<protein>
    <recommendedName>
        <fullName evidence="1">Protein YcgL</fullName>
    </recommendedName>
</protein>
<gene>
    <name evidence="1" type="primary">ycgL</name>
    <name type="ordered locus">ECED1_1321</name>
</gene>
<organism>
    <name type="scientific">Escherichia coli O81 (strain ED1a)</name>
    <dbReference type="NCBI Taxonomy" id="585397"/>
    <lineage>
        <taxon>Bacteria</taxon>
        <taxon>Pseudomonadati</taxon>
        <taxon>Pseudomonadota</taxon>
        <taxon>Gammaproteobacteria</taxon>
        <taxon>Enterobacterales</taxon>
        <taxon>Enterobacteriaceae</taxon>
        <taxon>Escherichia</taxon>
    </lineage>
</organism>
<evidence type="ECO:0000255" key="1">
    <source>
        <dbReference type="HAMAP-Rule" id="MF_01866"/>
    </source>
</evidence>
<dbReference type="EMBL" id="CU928162">
    <property type="protein sequence ID" value="CAR07521.1"/>
    <property type="molecule type" value="Genomic_DNA"/>
</dbReference>
<dbReference type="SMR" id="B7MTV7"/>
<dbReference type="KEGG" id="ecq:ECED1_1321"/>
<dbReference type="HOGENOM" id="CLU_155118_1_0_6"/>
<dbReference type="Proteomes" id="UP000000748">
    <property type="component" value="Chromosome"/>
</dbReference>
<dbReference type="Gene3D" id="3.10.510.20">
    <property type="entry name" value="YcgL domain"/>
    <property type="match status" value="1"/>
</dbReference>
<dbReference type="HAMAP" id="MF_01866">
    <property type="entry name" value="UPF0745"/>
    <property type="match status" value="1"/>
</dbReference>
<dbReference type="InterPro" id="IPR038068">
    <property type="entry name" value="YcgL-like_sf"/>
</dbReference>
<dbReference type="InterPro" id="IPR027354">
    <property type="entry name" value="YcgL_dom"/>
</dbReference>
<dbReference type="PANTHER" id="PTHR38109">
    <property type="entry name" value="PROTEIN YCGL"/>
    <property type="match status" value="1"/>
</dbReference>
<dbReference type="PANTHER" id="PTHR38109:SF1">
    <property type="entry name" value="PROTEIN YCGL"/>
    <property type="match status" value="1"/>
</dbReference>
<dbReference type="Pfam" id="PF05166">
    <property type="entry name" value="YcgL"/>
    <property type="match status" value="1"/>
</dbReference>
<dbReference type="SUPFAM" id="SSF160191">
    <property type="entry name" value="YcgL-like"/>
    <property type="match status" value="1"/>
</dbReference>
<dbReference type="PROSITE" id="PS51648">
    <property type="entry name" value="YCGL"/>
    <property type="match status" value="1"/>
</dbReference>
<reference key="1">
    <citation type="journal article" date="2009" name="PLoS Genet.">
        <title>Organised genome dynamics in the Escherichia coli species results in highly diverse adaptive paths.</title>
        <authorList>
            <person name="Touchon M."/>
            <person name="Hoede C."/>
            <person name="Tenaillon O."/>
            <person name="Barbe V."/>
            <person name="Baeriswyl S."/>
            <person name="Bidet P."/>
            <person name="Bingen E."/>
            <person name="Bonacorsi S."/>
            <person name="Bouchier C."/>
            <person name="Bouvet O."/>
            <person name="Calteau A."/>
            <person name="Chiapello H."/>
            <person name="Clermont O."/>
            <person name="Cruveiller S."/>
            <person name="Danchin A."/>
            <person name="Diard M."/>
            <person name="Dossat C."/>
            <person name="Karoui M.E."/>
            <person name="Frapy E."/>
            <person name="Garry L."/>
            <person name="Ghigo J.M."/>
            <person name="Gilles A.M."/>
            <person name="Johnson J."/>
            <person name="Le Bouguenec C."/>
            <person name="Lescat M."/>
            <person name="Mangenot S."/>
            <person name="Martinez-Jehanne V."/>
            <person name="Matic I."/>
            <person name="Nassif X."/>
            <person name="Oztas S."/>
            <person name="Petit M.A."/>
            <person name="Pichon C."/>
            <person name="Rouy Z."/>
            <person name="Ruf C.S."/>
            <person name="Schneider D."/>
            <person name="Tourret J."/>
            <person name="Vacherie B."/>
            <person name="Vallenet D."/>
            <person name="Medigue C."/>
            <person name="Rocha E.P.C."/>
            <person name="Denamur E."/>
        </authorList>
    </citation>
    <scope>NUCLEOTIDE SEQUENCE [LARGE SCALE GENOMIC DNA]</scope>
    <source>
        <strain>ED1a</strain>
    </source>
</reference>
<proteinExistence type="inferred from homology"/>
<sequence>MPKPGILKSKSMFCVIYRSSKRDQTYLYVEKKDDFSRVPEELMKGFGQPQLAMILPLDGRKKLVNADIEKVKQALTEQGYYLQLPPPPEDLLKQHLSVMGQKTDDTNK</sequence>
<accession>B7MTV7</accession>
<feature type="chain" id="PRO_0000375304" description="Protein YcgL">
    <location>
        <begin position="1"/>
        <end position="108"/>
    </location>
</feature>
<feature type="domain" description="YcgL" evidence="1">
    <location>
        <begin position="12"/>
        <end position="96"/>
    </location>
</feature>